<dbReference type="EMBL" id="CP000046">
    <property type="protein sequence ID" value="AAW37340.1"/>
    <property type="molecule type" value="Genomic_DNA"/>
</dbReference>
<dbReference type="RefSeq" id="WP_000240580.1">
    <property type="nucleotide sequence ID" value="NZ_JBGOFO010000001.1"/>
</dbReference>
<dbReference type="KEGG" id="sac:SACOL2690"/>
<dbReference type="HOGENOM" id="CLU_2289916_0_0_9"/>
<dbReference type="Proteomes" id="UP000000530">
    <property type="component" value="Chromosome"/>
</dbReference>
<dbReference type="GO" id="GO:0005886">
    <property type="term" value="C:plasma membrane"/>
    <property type="evidence" value="ECO:0007669"/>
    <property type="project" value="UniProtKB-SubCell"/>
</dbReference>
<dbReference type="InterPro" id="IPR020510">
    <property type="entry name" value="IcaD"/>
</dbReference>
<dbReference type="NCBIfam" id="TIGR03932">
    <property type="entry name" value="PIA_icaD"/>
    <property type="match status" value="1"/>
</dbReference>
<gene>
    <name type="primary">icaD</name>
    <name type="ordered locus">SACOL2690</name>
</gene>
<organism>
    <name type="scientific">Staphylococcus aureus (strain COL)</name>
    <dbReference type="NCBI Taxonomy" id="93062"/>
    <lineage>
        <taxon>Bacteria</taxon>
        <taxon>Bacillati</taxon>
        <taxon>Bacillota</taxon>
        <taxon>Bacilli</taxon>
        <taxon>Bacillales</taxon>
        <taxon>Staphylococcaceae</taxon>
        <taxon>Staphylococcus</taxon>
    </lineage>
</organism>
<evidence type="ECO:0000250" key="1"/>
<evidence type="ECO:0000255" key="2"/>
<evidence type="ECO:0000305" key="3"/>
<accession>Q5HCN0</accession>
<name>ICAD_STAAC</name>
<sequence>MVKPRQREYPTLKSSLNIVRETALIAISCVFWIYCLVVLLVYIGTIFEIHDESINTIRVALNIENTEILDIFETMGIFAIIIFVFFTISILIQKWQRGRES</sequence>
<feature type="chain" id="PRO_0000084134" description="Poly-beta-1,6-N-acetyl-D-glucosamine synthesis protein IcaD">
    <location>
        <begin position="1"/>
        <end position="101"/>
    </location>
</feature>
<feature type="transmembrane region" description="Helical" evidence="2">
    <location>
        <begin position="24"/>
        <end position="46"/>
    </location>
</feature>
<feature type="transmembrane region" description="Helical" evidence="2">
    <location>
        <begin position="71"/>
        <end position="93"/>
    </location>
</feature>
<keyword id="KW-1003">Cell membrane</keyword>
<keyword id="KW-0472">Membrane</keyword>
<keyword id="KW-0812">Transmembrane</keyword>
<keyword id="KW-1133">Transmembrane helix</keyword>
<proteinExistence type="inferred from homology"/>
<reference key="1">
    <citation type="journal article" date="2005" name="J. Bacteriol.">
        <title>Insights on evolution of virulence and resistance from the complete genome analysis of an early methicillin-resistant Staphylococcus aureus strain and a biofilm-producing methicillin-resistant Staphylococcus epidermidis strain.</title>
        <authorList>
            <person name="Gill S.R."/>
            <person name="Fouts D.E."/>
            <person name="Archer G.L."/>
            <person name="Mongodin E.F."/>
            <person name="DeBoy R.T."/>
            <person name="Ravel J."/>
            <person name="Paulsen I.T."/>
            <person name="Kolonay J.F."/>
            <person name="Brinkac L.M."/>
            <person name="Beanan M.J."/>
            <person name="Dodson R.J."/>
            <person name="Daugherty S.C."/>
            <person name="Madupu R."/>
            <person name="Angiuoli S.V."/>
            <person name="Durkin A.S."/>
            <person name="Haft D.H."/>
            <person name="Vamathevan J.J."/>
            <person name="Khouri H."/>
            <person name="Utterback T.R."/>
            <person name="Lee C."/>
            <person name="Dimitrov G."/>
            <person name="Jiang L."/>
            <person name="Qin H."/>
            <person name="Weidman J."/>
            <person name="Tran K."/>
            <person name="Kang K.H."/>
            <person name="Hance I.R."/>
            <person name="Nelson K.E."/>
            <person name="Fraser C.M."/>
        </authorList>
    </citation>
    <scope>NUCLEOTIDE SEQUENCE [LARGE SCALE GENOMIC DNA]</scope>
    <source>
        <strain>COL</strain>
    </source>
</reference>
<comment type="function">
    <text evidence="1">Necessary for the synthesis of poly-beta-1,6-N-acetyl-D-glucosamine (PNAG, also referred to as PIA), a biofilm adhesin polysaccharide. Is required for full IcaA N-acetylglucosaminyltransferase activity (By similarity).</text>
</comment>
<comment type="subcellular location">
    <subcellularLocation>
        <location evidence="1">Cell membrane</location>
        <topology evidence="1">Multi-pass membrane protein</topology>
    </subcellularLocation>
</comment>
<comment type="miscellaneous">
    <text>In strain COL, the gene icaC is interrupted by a natural frameshift.</text>
</comment>
<comment type="similarity">
    <text evidence="3">Belongs to the IcaD family.</text>
</comment>
<protein>
    <recommendedName>
        <fullName>Poly-beta-1,6-N-acetyl-D-glucosamine synthesis protein IcaD</fullName>
        <shortName>PGA synthesis protein IcaD</shortName>
        <shortName>Poly-beta-1,6-GlcNAc synthesis protein IcaD</shortName>
    </recommendedName>
    <alternativeName>
        <fullName>Biofilm polysaccharide intercellular adhesin synthesis protein IcaD</fullName>
        <shortName>Biofilm PIA synthesis protein IcaD</shortName>
    </alternativeName>
    <alternativeName>
        <fullName>Intercellular adhesion protein D</fullName>
    </alternativeName>
</protein>